<name>GET1_ASPFU</name>
<dbReference type="EMBL" id="AAHF01000005">
    <property type="protein sequence ID" value="EAL90152.1"/>
    <property type="molecule type" value="Genomic_DNA"/>
</dbReference>
<dbReference type="RefSeq" id="XP_752190.1">
    <property type="nucleotide sequence ID" value="XM_747097.1"/>
</dbReference>
<dbReference type="SMR" id="Q4WNN2"/>
<dbReference type="STRING" id="330879.Q4WNN2"/>
<dbReference type="EnsemblFungi" id="EAL90152">
    <property type="protein sequence ID" value="EAL90152"/>
    <property type="gene ID" value="AFUA_4G06340"/>
</dbReference>
<dbReference type="GeneID" id="3508999"/>
<dbReference type="KEGG" id="afm:AFUA_4G06340"/>
<dbReference type="VEuPathDB" id="FungiDB:Afu4g06340"/>
<dbReference type="eggNOG" id="KOG4253">
    <property type="taxonomic scope" value="Eukaryota"/>
</dbReference>
<dbReference type="HOGENOM" id="CLU_089418_1_0_1"/>
<dbReference type="InParanoid" id="Q4WNN2"/>
<dbReference type="OMA" id="AEWIISF"/>
<dbReference type="OrthoDB" id="69461at2759"/>
<dbReference type="Proteomes" id="UP000002530">
    <property type="component" value="Chromosome 4"/>
</dbReference>
<dbReference type="GO" id="GO:0005789">
    <property type="term" value="C:endoplasmic reticulum membrane"/>
    <property type="evidence" value="ECO:0007669"/>
    <property type="project" value="UniProtKB-SubCell"/>
</dbReference>
<dbReference type="GO" id="GO:0043529">
    <property type="term" value="C:GET complex"/>
    <property type="evidence" value="ECO:0000318"/>
    <property type="project" value="GO_Central"/>
</dbReference>
<dbReference type="GO" id="GO:0043495">
    <property type="term" value="F:protein-membrane adaptor activity"/>
    <property type="evidence" value="ECO:0000318"/>
    <property type="project" value="GO_Central"/>
</dbReference>
<dbReference type="GO" id="GO:0071816">
    <property type="term" value="P:tail-anchored membrane protein insertion into ER membrane"/>
    <property type="evidence" value="ECO:0000318"/>
    <property type="project" value="GO_Central"/>
</dbReference>
<dbReference type="FunFam" id="1.10.287.660:FF:000006">
    <property type="entry name" value="Protein GET1"/>
    <property type="match status" value="1"/>
</dbReference>
<dbReference type="Gene3D" id="1.10.287.660">
    <property type="entry name" value="Helix hairpin bin"/>
    <property type="match status" value="1"/>
</dbReference>
<dbReference type="HAMAP" id="MF_03113">
    <property type="entry name" value="Get1"/>
    <property type="match status" value="1"/>
</dbReference>
<dbReference type="InterPro" id="IPR028945">
    <property type="entry name" value="Get1"/>
</dbReference>
<dbReference type="InterPro" id="IPR027538">
    <property type="entry name" value="Get1_fungi"/>
</dbReference>
<dbReference type="InterPro" id="IPR029012">
    <property type="entry name" value="Helix_hairpin_bin_sf"/>
</dbReference>
<dbReference type="PANTHER" id="PTHR42650:SF1">
    <property type="entry name" value="GUIDED ENTRY OF TAIL-ANCHORED PROTEINS FACTOR 1"/>
    <property type="match status" value="1"/>
</dbReference>
<dbReference type="PANTHER" id="PTHR42650">
    <property type="entry name" value="TAIL-ANCHORED PROTEIN INSERTION RECEPTOR WRB"/>
    <property type="match status" value="1"/>
</dbReference>
<dbReference type="Pfam" id="PF04420">
    <property type="entry name" value="CHD5"/>
    <property type="match status" value="1"/>
</dbReference>
<accession>Q4WNN2</accession>
<gene>
    <name type="primary">get1</name>
    <name type="ORF">AFUA_4G06340</name>
</gene>
<feature type="chain" id="PRO_0000388577" description="Protein get1">
    <location>
        <begin position="1"/>
        <end position="200"/>
    </location>
</feature>
<feature type="topological domain" description="Lumenal" evidence="1">
    <location>
        <begin position="1"/>
        <end position="4"/>
    </location>
</feature>
<feature type="transmembrane region" description="Helical" evidence="1">
    <location>
        <begin position="5"/>
        <end position="24"/>
    </location>
</feature>
<feature type="topological domain" description="Cytoplasmic" evidence="1">
    <location>
        <begin position="25"/>
        <end position="110"/>
    </location>
</feature>
<feature type="transmembrane region" description="Helical" evidence="1">
    <location>
        <begin position="111"/>
        <end position="131"/>
    </location>
</feature>
<feature type="topological domain" description="Lumenal" evidence="1">
    <location>
        <begin position="132"/>
        <end position="155"/>
    </location>
</feature>
<feature type="transmembrane region" description="Helical" evidence="1">
    <location>
        <begin position="156"/>
        <end position="172"/>
    </location>
</feature>
<feature type="topological domain" description="Cytoplasmic" evidence="1">
    <location>
        <begin position="173"/>
        <end position="200"/>
    </location>
</feature>
<feature type="coiled-coil region" evidence="1">
    <location>
        <begin position="42"/>
        <end position="100"/>
    </location>
</feature>
<organism>
    <name type="scientific">Aspergillus fumigatus (strain ATCC MYA-4609 / CBS 101355 / FGSC A1100 / Af293)</name>
    <name type="common">Neosartorya fumigata</name>
    <dbReference type="NCBI Taxonomy" id="330879"/>
    <lineage>
        <taxon>Eukaryota</taxon>
        <taxon>Fungi</taxon>
        <taxon>Dikarya</taxon>
        <taxon>Ascomycota</taxon>
        <taxon>Pezizomycotina</taxon>
        <taxon>Eurotiomycetes</taxon>
        <taxon>Eurotiomycetidae</taxon>
        <taxon>Eurotiales</taxon>
        <taxon>Aspergillaceae</taxon>
        <taxon>Aspergillus</taxon>
        <taxon>Aspergillus subgen. Fumigati</taxon>
    </lineage>
</organism>
<evidence type="ECO:0000255" key="1">
    <source>
        <dbReference type="HAMAP-Rule" id="MF_03113"/>
    </source>
</evidence>
<proteinExistence type="inferred from homology"/>
<protein>
    <recommendedName>
        <fullName evidence="1">Protein get1</fullName>
    </recommendedName>
    <alternativeName>
        <fullName evidence="1">Guided entry of tail-anchored proteins 1</fullName>
    </alternativeName>
</protein>
<reference key="1">
    <citation type="journal article" date="2005" name="Nature">
        <title>Genomic sequence of the pathogenic and allergenic filamentous fungus Aspergillus fumigatus.</title>
        <authorList>
            <person name="Nierman W.C."/>
            <person name="Pain A."/>
            <person name="Anderson M.J."/>
            <person name="Wortman J.R."/>
            <person name="Kim H.S."/>
            <person name="Arroyo J."/>
            <person name="Berriman M."/>
            <person name="Abe K."/>
            <person name="Archer D.B."/>
            <person name="Bermejo C."/>
            <person name="Bennett J.W."/>
            <person name="Bowyer P."/>
            <person name="Chen D."/>
            <person name="Collins M."/>
            <person name="Coulsen R."/>
            <person name="Davies R."/>
            <person name="Dyer P.S."/>
            <person name="Farman M.L."/>
            <person name="Fedorova N."/>
            <person name="Fedorova N.D."/>
            <person name="Feldblyum T.V."/>
            <person name="Fischer R."/>
            <person name="Fosker N."/>
            <person name="Fraser A."/>
            <person name="Garcia J.L."/>
            <person name="Garcia M.J."/>
            <person name="Goble A."/>
            <person name="Goldman G.H."/>
            <person name="Gomi K."/>
            <person name="Griffith-Jones S."/>
            <person name="Gwilliam R."/>
            <person name="Haas B.J."/>
            <person name="Haas H."/>
            <person name="Harris D.E."/>
            <person name="Horiuchi H."/>
            <person name="Huang J."/>
            <person name="Humphray S."/>
            <person name="Jimenez J."/>
            <person name="Keller N."/>
            <person name="Khouri H."/>
            <person name="Kitamoto K."/>
            <person name="Kobayashi T."/>
            <person name="Konzack S."/>
            <person name="Kulkarni R."/>
            <person name="Kumagai T."/>
            <person name="Lafton A."/>
            <person name="Latge J.-P."/>
            <person name="Li W."/>
            <person name="Lord A."/>
            <person name="Lu C."/>
            <person name="Majoros W.H."/>
            <person name="May G.S."/>
            <person name="Miller B.L."/>
            <person name="Mohamoud Y."/>
            <person name="Molina M."/>
            <person name="Monod M."/>
            <person name="Mouyna I."/>
            <person name="Mulligan S."/>
            <person name="Murphy L.D."/>
            <person name="O'Neil S."/>
            <person name="Paulsen I."/>
            <person name="Penalva M.A."/>
            <person name="Pertea M."/>
            <person name="Price C."/>
            <person name="Pritchard B.L."/>
            <person name="Quail M.A."/>
            <person name="Rabbinowitsch E."/>
            <person name="Rawlins N."/>
            <person name="Rajandream M.A."/>
            <person name="Reichard U."/>
            <person name="Renauld H."/>
            <person name="Robson G.D."/>
            <person name="Rodriguez de Cordoba S."/>
            <person name="Rodriguez-Pena J.M."/>
            <person name="Ronning C.M."/>
            <person name="Rutter S."/>
            <person name="Salzberg S.L."/>
            <person name="Sanchez M."/>
            <person name="Sanchez-Ferrero J.C."/>
            <person name="Saunders D."/>
            <person name="Seeger K."/>
            <person name="Squares R."/>
            <person name="Squares S."/>
            <person name="Takeuchi M."/>
            <person name="Tekaia F."/>
            <person name="Turner G."/>
            <person name="Vazquez de Aldana C.R."/>
            <person name="Weidman J."/>
            <person name="White O."/>
            <person name="Woodward J.R."/>
            <person name="Yu J.-H."/>
            <person name="Fraser C.M."/>
            <person name="Galagan J.E."/>
            <person name="Asai K."/>
            <person name="Machida M."/>
            <person name="Hall N."/>
            <person name="Barrell B.G."/>
            <person name="Denning D.W."/>
        </authorList>
    </citation>
    <scope>NUCLEOTIDE SEQUENCE [LARGE SCALE GENOMIC DNA]</scope>
    <source>
        <strain>ATCC MYA-4609 / CBS 101355 / FGSC A1100 / Af293</strain>
    </source>
</reference>
<comment type="function">
    <text evidence="1">Required for the post-translational delivery of tail-anchored (TA) proteins to the endoplasmic reticulum. Acts as a membrane receptor for soluble get3, which recognizes and selectively binds the transmembrane domain of TA proteins in the cytosol.</text>
</comment>
<comment type="subunit">
    <text evidence="1">Interacts with get3.</text>
</comment>
<comment type="subcellular location">
    <subcellularLocation>
        <location evidence="1">Endoplasmic reticulum membrane</location>
        <topology evidence="1">Multi-pass membrane protein</topology>
    </subcellularLocation>
</comment>
<comment type="similarity">
    <text evidence="1">Belongs to the WRB/GET1 family.</text>
</comment>
<sequence length="200" mass="22846">MLSLILTIFFVHVAIYLVNTVGATTIDTLLWILYLKLPTSTSRNARQQSRLKREVVQLKREMNNTSSQDEFAKWAKLRRKHDKAMDEYEAMNKKLTAQKTSFDWSVKIARWLSTNGLKIFLQFYYSKTPVFALPAGWFPFYVEWVLSFPRAPRGSVSVQVWNSVCATAIAVMAEIVTSMLLQLRSRSASPASTAKAQKAQ</sequence>
<keyword id="KW-0175">Coiled coil</keyword>
<keyword id="KW-0256">Endoplasmic reticulum</keyword>
<keyword id="KW-0472">Membrane</keyword>
<keyword id="KW-1185">Reference proteome</keyword>
<keyword id="KW-0812">Transmembrane</keyword>
<keyword id="KW-1133">Transmembrane helix</keyword>
<keyword id="KW-0813">Transport</keyword>